<organism>
    <name type="scientific">Shewanella loihica (strain ATCC BAA-1088 / PV-4)</name>
    <dbReference type="NCBI Taxonomy" id="323850"/>
    <lineage>
        <taxon>Bacteria</taxon>
        <taxon>Pseudomonadati</taxon>
        <taxon>Pseudomonadota</taxon>
        <taxon>Gammaproteobacteria</taxon>
        <taxon>Alteromonadales</taxon>
        <taxon>Shewanellaceae</taxon>
        <taxon>Shewanella</taxon>
    </lineage>
</organism>
<sequence length="211" mass="23390">MNKPSIDQTPANQARARVYRLLSDLFAKEIDHQRLQSLQSAEAQAFFDLLAGEPRLAPEVNIIQEVLAELGDEASLLNLAADYCGLFLVGGKQSANPYAGLYLTPEGDEEQPQLFGPQHQEMLALLKQSKLGVQSDFPEPADHISVILAYVAQQATSLDDKAQQRFIAKYLDAWLAEFAKRVSDRDPGRFYQALARLTQIWVSLDCEALGA</sequence>
<name>TORD_SHELP</name>
<proteinExistence type="inferred from homology"/>
<protein>
    <recommendedName>
        <fullName evidence="1">Chaperone protein TorD</fullName>
    </recommendedName>
</protein>
<keyword id="KW-0143">Chaperone</keyword>
<keyword id="KW-0963">Cytoplasm</keyword>
<keyword id="KW-1185">Reference proteome</keyword>
<dbReference type="EMBL" id="CP000606">
    <property type="protein sequence ID" value="ABO24665.1"/>
    <property type="molecule type" value="Genomic_DNA"/>
</dbReference>
<dbReference type="RefSeq" id="WP_011866596.1">
    <property type="nucleotide sequence ID" value="NC_009092.1"/>
</dbReference>
<dbReference type="SMR" id="A3QGR7"/>
<dbReference type="STRING" id="323850.Shew_2799"/>
<dbReference type="KEGG" id="slo:Shew_2799"/>
<dbReference type="eggNOG" id="COG3381">
    <property type="taxonomic scope" value="Bacteria"/>
</dbReference>
<dbReference type="HOGENOM" id="CLU_077650_4_1_6"/>
<dbReference type="OrthoDB" id="7849731at2"/>
<dbReference type="Proteomes" id="UP000001558">
    <property type="component" value="Chromosome"/>
</dbReference>
<dbReference type="GO" id="GO:0005737">
    <property type="term" value="C:cytoplasm"/>
    <property type="evidence" value="ECO:0007669"/>
    <property type="project" value="UniProtKB-SubCell"/>
</dbReference>
<dbReference type="GO" id="GO:0051259">
    <property type="term" value="P:protein complex oligomerization"/>
    <property type="evidence" value="ECO:0007669"/>
    <property type="project" value="InterPro"/>
</dbReference>
<dbReference type="GO" id="GO:0006457">
    <property type="term" value="P:protein folding"/>
    <property type="evidence" value="ECO:0007669"/>
    <property type="project" value="UniProtKB-UniRule"/>
</dbReference>
<dbReference type="Gene3D" id="1.20.120.1820">
    <property type="match status" value="1"/>
</dbReference>
<dbReference type="Gene3D" id="1.20.1280.20">
    <property type="entry name" value="HscB, C-terminal domain"/>
    <property type="match status" value="1"/>
</dbReference>
<dbReference type="HAMAP" id="MF_01150">
    <property type="entry name" value="TorD"/>
    <property type="match status" value="1"/>
</dbReference>
<dbReference type="InterPro" id="IPR023069">
    <property type="entry name" value="Chaperone_TorD"/>
</dbReference>
<dbReference type="InterPro" id="IPR020945">
    <property type="entry name" value="DMSO/NO3_reduct_chaperone"/>
</dbReference>
<dbReference type="InterPro" id="IPR036386">
    <property type="entry name" value="HscB_C_sf"/>
</dbReference>
<dbReference type="InterPro" id="IPR036411">
    <property type="entry name" value="TorD-like_sf"/>
</dbReference>
<dbReference type="InterPro" id="IPR050289">
    <property type="entry name" value="TorD/DmsD_chaperones"/>
</dbReference>
<dbReference type="NCBIfam" id="NF003442">
    <property type="entry name" value="PRK04976.1"/>
    <property type="match status" value="1"/>
</dbReference>
<dbReference type="PANTHER" id="PTHR34227:SF11">
    <property type="entry name" value="CHAPERONE PROTEIN TORD"/>
    <property type="match status" value="1"/>
</dbReference>
<dbReference type="PANTHER" id="PTHR34227">
    <property type="entry name" value="CHAPERONE PROTEIN YCDY"/>
    <property type="match status" value="1"/>
</dbReference>
<dbReference type="Pfam" id="PF02613">
    <property type="entry name" value="Nitrate_red_del"/>
    <property type="match status" value="1"/>
</dbReference>
<dbReference type="SUPFAM" id="SSF89155">
    <property type="entry name" value="TorD-like"/>
    <property type="match status" value="1"/>
</dbReference>
<evidence type="ECO:0000255" key="1">
    <source>
        <dbReference type="HAMAP-Rule" id="MF_01150"/>
    </source>
</evidence>
<feature type="chain" id="PRO_0000414901" description="Chaperone protein TorD">
    <location>
        <begin position="1"/>
        <end position="211"/>
    </location>
</feature>
<gene>
    <name evidence="1" type="primary">torD</name>
    <name type="ordered locus">Shew_2799</name>
</gene>
<comment type="function">
    <text evidence="1">Involved in the biogenesis of TorA. Acts on TorA before the insertion of the molybdenum cofactor and, as a result, probably favors a conformation of the apoenzyme that is competent for acquiring the cofactor.</text>
</comment>
<comment type="subcellular location">
    <subcellularLocation>
        <location evidence="1">Cytoplasm</location>
    </subcellularLocation>
</comment>
<comment type="similarity">
    <text evidence="1">Belongs to the TorD/DmsD family. TorD subfamily.</text>
</comment>
<reference key="1">
    <citation type="submission" date="2007-03" db="EMBL/GenBank/DDBJ databases">
        <title>Complete sequence of Shewanella loihica PV-4.</title>
        <authorList>
            <consortium name="US DOE Joint Genome Institute"/>
            <person name="Copeland A."/>
            <person name="Lucas S."/>
            <person name="Lapidus A."/>
            <person name="Barry K."/>
            <person name="Detter J.C."/>
            <person name="Glavina del Rio T."/>
            <person name="Hammon N."/>
            <person name="Israni S."/>
            <person name="Dalin E."/>
            <person name="Tice H."/>
            <person name="Pitluck S."/>
            <person name="Chain P."/>
            <person name="Malfatti S."/>
            <person name="Shin M."/>
            <person name="Vergez L."/>
            <person name="Schmutz J."/>
            <person name="Larimer F."/>
            <person name="Land M."/>
            <person name="Hauser L."/>
            <person name="Kyrpides N."/>
            <person name="Mikhailova N."/>
            <person name="Romine M.F."/>
            <person name="Serres G."/>
            <person name="Fredrickson J."/>
            <person name="Tiedje J."/>
            <person name="Richardson P."/>
        </authorList>
    </citation>
    <scope>NUCLEOTIDE SEQUENCE [LARGE SCALE GENOMIC DNA]</scope>
    <source>
        <strain>ATCC BAA-1088 / PV-4</strain>
    </source>
</reference>
<accession>A3QGR7</accession>